<sequence>MSQLALQMSSLGVEGEGIWLALGTIGMLLGMLYFIADGLDVQDPRQKEFYVITILIPAIAAASYLSMFFGFGLTEVSLANGRVVDVYWARYADWLFTTPLLLLDIGLLAGASQRDIGALVGIDAFMIVTGLVATLTKVVVARYAFWTISTISMVFLLYYLVAVFGEAVSDADEDTRSTFNALRNIILVTWAIYPVAWLVGTEGLALTGLYGETLLFMVLDLVAKVGFGFILLRSRAIMGGGSEPTPSAQETAAD</sequence>
<reference key="1">
    <citation type="journal article" date="2011" name="PLoS ONE">
        <title>Haloquadratum walsbyi: limited diversity in a global pond.</title>
        <authorList>
            <person name="Dyall-Smith M."/>
            <person name="Pfeiffer F."/>
            <person name="Klee K."/>
            <person name="Palm P."/>
            <person name="Gross K."/>
            <person name="Schuster S.C."/>
            <person name="Rampp M."/>
            <person name="Oesterhelt D."/>
        </authorList>
    </citation>
    <scope>NUCLEOTIDE SEQUENCE [LARGE SCALE GENOMIC DNA]</scope>
    <scope>IDENTIFICATION BY MASS SPECTROMETRY</scope>
    <source>
        <strain>DSM 16854 / JCM 12705 / C23</strain>
    </source>
</reference>
<gene>
    <name type="primary">bop1</name>
    <name type="ordered locus">Hqrw_1016</name>
</gene>
<keyword id="KW-0002">3D-structure</keyword>
<keyword id="KW-1003">Cell membrane</keyword>
<keyword id="KW-0157">Chromophore</keyword>
<keyword id="KW-0375">Hydrogen ion transport</keyword>
<keyword id="KW-0406">Ion transport</keyword>
<keyword id="KW-0472">Membrane</keyword>
<keyword id="KW-0600">Photoreceptor protein</keyword>
<keyword id="KW-0873">Pyrrolidone carboxylic acid</keyword>
<keyword id="KW-0675">Receptor</keyword>
<keyword id="KW-0681">Retinal protein</keyword>
<keyword id="KW-0716">Sensory transduction</keyword>
<keyword id="KW-0812">Transmembrane</keyword>
<keyword id="KW-1133">Transmembrane helix</keyword>
<keyword id="KW-0813">Transport</keyword>
<name>BACR1_HALWC</name>
<dbReference type="EMBL" id="FR746099">
    <property type="protein sequence ID" value="CCC38998.1"/>
    <property type="molecule type" value="Genomic_DNA"/>
</dbReference>
<dbReference type="RefSeq" id="WP_011570311.1">
    <property type="nucleotide sequence ID" value="NC_017459.1"/>
</dbReference>
<dbReference type="PDB" id="4WAV">
    <property type="method" value="X-ray"/>
    <property type="resolution" value="2.80 A"/>
    <property type="chains" value="A/B=1-254"/>
</dbReference>
<dbReference type="PDBsum" id="4WAV"/>
<dbReference type="SMR" id="G0LFX8"/>
<dbReference type="TCDB" id="3.E.1.1.3">
    <property type="family name" value="the ion-translocating microbial rhodopsin (mr) family"/>
</dbReference>
<dbReference type="GeneID" id="12445619"/>
<dbReference type="KEGG" id="hwc:Hqrw_1016"/>
<dbReference type="HOGENOM" id="CLU_054785_5_1_2"/>
<dbReference type="OrthoDB" id="186433at2157"/>
<dbReference type="EvolutionaryTrace" id="G0LFX8"/>
<dbReference type="Proteomes" id="UP000007954">
    <property type="component" value="Chromosome"/>
</dbReference>
<dbReference type="GO" id="GO:0005886">
    <property type="term" value="C:plasma membrane"/>
    <property type="evidence" value="ECO:0007669"/>
    <property type="project" value="UniProtKB-SubCell"/>
</dbReference>
<dbReference type="GO" id="GO:0005216">
    <property type="term" value="F:monoatomic ion channel activity"/>
    <property type="evidence" value="ECO:0007669"/>
    <property type="project" value="InterPro"/>
</dbReference>
<dbReference type="GO" id="GO:0009881">
    <property type="term" value="F:photoreceptor activity"/>
    <property type="evidence" value="ECO:0007669"/>
    <property type="project" value="UniProtKB-KW"/>
</dbReference>
<dbReference type="GO" id="GO:0007602">
    <property type="term" value="P:phototransduction"/>
    <property type="evidence" value="ECO:0007669"/>
    <property type="project" value="UniProtKB-KW"/>
</dbReference>
<dbReference type="GO" id="GO:1902600">
    <property type="term" value="P:proton transmembrane transport"/>
    <property type="evidence" value="ECO:0007669"/>
    <property type="project" value="UniProtKB-KW"/>
</dbReference>
<dbReference type="CDD" id="cd15244">
    <property type="entry name" value="7tm_bacteriorhodopsin"/>
    <property type="match status" value="1"/>
</dbReference>
<dbReference type="Gene3D" id="1.20.1070.10">
    <property type="entry name" value="Rhodopsin 7-helix transmembrane proteins"/>
    <property type="match status" value="1"/>
</dbReference>
<dbReference type="InterPro" id="IPR001425">
    <property type="entry name" value="Arc/bac/fun_rhodopsins"/>
</dbReference>
<dbReference type="InterPro" id="IPR018229">
    <property type="entry name" value="Rhodopsin_retinal_BS"/>
</dbReference>
<dbReference type="PANTHER" id="PTHR28286">
    <property type="match status" value="1"/>
</dbReference>
<dbReference type="PANTHER" id="PTHR28286:SF2">
    <property type="entry name" value="BACTERIORHODOPSIN _OPSIN, NOPA (EUROFUNG)"/>
    <property type="match status" value="1"/>
</dbReference>
<dbReference type="Pfam" id="PF01036">
    <property type="entry name" value="Bac_rhodopsin"/>
    <property type="match status" value="1"/>
</dbReference>
<dbReference type="PRINTS" id="PR00251">
    <property type="entry name" value="BACTRLOPSIN"/>
</dbReference>
<dbReference type="SMART" id="SM01021">
    <property type="entry name" value="Bac_rhodopsin"/>
    <property type="match status" value="1"/>
</dbReference>
<dbReference type="SUPFAM" id="SSF81321">
    <property type="entry name" value="Family A G protein-coupled receptor-like"/>
    <property type="match status" value="1"/>
</dbReference>
<dbReference type="PROSITE" id="PS00950">
    <property type="entry name" value="BACTERIAL_OPSIN_1"/>
    <property type="match status" value="1"/>
</dbReference>
<dbReference type="PROSITE" id="PS00327">
    <property type="entry name" value="BACTERIAL_OPSIN_RET"/>
    <property type="match status" value="1"/>
</dbReference>
<organism>
    <name type="scientific">Haloquadratum walsbyi (strain DSM 16854 / JCM 12705 / C23)</name>
    <dbReference type="NCBI Taxonomy" id="768065"/>
    <lineage>
        <taxon>Archaea</taxon>
        <taxon>Methanobacteriati</taxon>
        <taxon>Methanobacteriota</taxon>
        <taxon>Stenosarchaea group</taxon>
        <taxon>Halobacteria</taxon>
        <taxon>Halobacteriales</taxon>
        <taxon>Haloferacaceae</taxon>
        <taxon>Haloquadratum</taxon>
    </lineage>
</organism>
<accession>G0LFX8</accession>
<protein>
    <recommendedName>
        <fullName>Bacteriorhodopsin-I</fullName>
    </recommendedName>
</protein>
<proteinExistence type="evidence at protein level"/>
<evidence type="ECO:0000250" key="1"/>
<evidence type="ECO:0000255" key="2"/>
<evidence type="ECO:0000305" key="3"/>
<evidence type="ECO:0007829" key="4">
    <source>
        <dbReference type="PDB" id="4WAV"/>
    </source>
</evidence>
<comment type="function">
    <text evidence="1">Light-driven proton pump.</text>
</comment>
<comment type="subcellular location">
    <subcellularLocation>
        <location evidence="3">Cell membrane</location>
        <topology evidence="3">Multi-pass membrane protein</topology>
    </subcellularLocation>
</comment>
<comment type="PTM">
    <text evidence="1">The covalent binding of retinal to the apoprotein, bacterioopsin, generates bacteriorhodopsin.</text>
</comment>
<comment type="similarity">
    <text evidence="3">Belongs to the archaeal/bacterial/fungal opsin family.</text>
</comment>
<feature type="propeptide" id="PRO_0000428844" evidence="1">
    <location>
        <begin position="1"/>
        <end position="6"/>
    </location>
</feature>
<feature type="chain" id="PRO_0000428845" description="Bacteriorhodopsin-I">
    <location>
        <begin position="7"/>
        <end position="254"/>
    </location>
</feature>
<feature type="transmembrane region" description="Helical" evidence="2">
    <location>
        <begin position="16"/>
        <end position="36"/>
    </location>
</feature>
<feature type="transmembrane region" description="Helical" evidence="2">
    <location>
        <begin position="51"/>
        <end position="71"/>
    </location>
</feature>
<feature type="transmembrane region" description="Helical" evidence="2">
    <location>
        <begin position="91"/>
        <end position="111"/>
    </location>
</feature>
<feature type="transmembrane region" description="Helical" evidence="2">
    <location>
        <begin position="116"/>
        <end position="136"/>
    </location>
</feature>
<feature type="transmembrane region" description="Helical" evidence="2">
    <location>
        <begin position="144"/>
        <end position="164"/>
    </location>
</feature>
<feature type="transmembrane region" description="Helical" evidence="2">
    <location>
        <begin position="185"/>
        <end position="205"/>
    </location>
</feature>
<feature type="transmembrane region" description="Helical" evidence="2">
    <location>
        <begin position="212"/>
        <end position="232"/>
    </location>
</feature>
<feature type="site" description="Primary proton acceptor" evidence="1">
    <location>
        <position position="93"/>
    </location>
</feature>
<feature type="modified residue" description="Pyrrolidone carboxylic acid" evidence="1">
    <location>
        <position position="7"/>
    </location>
</feature>
<feature type="modified residue" description="N6-(retinylidene)lysine" evidence="1">
    <location>
        <position position="224"/>
    </location>
</feature>
<feature type="helix" evidence="4">
    <location>
        <begin position="17"/>
        <end position="37"/>
    </location>
</feature>
<feature type="helix" evidence="4">
    <location>
        <begin position="44"/>
        <end position="68"/>
    </location>
</feature>
<feature type="turn" evidence="4">
    <location>
        <begin position="69"/>
        <end position="72"/>
    </location>
</feature>
<feature type="strand" evidence="4">
    <location>
        <begin position="75"/>
        <end position="77"/>
    </location>
</feature>
<feature type="strand" evidence="4">
    <location>
        <begin position="83"/>
        <end position="85"/>
    </location>
</feature>
<feature type="helix" evidence="4">
    <location>
        <begin position="89"/>
        <end position="109"/>
    </location>
</feature>
<feature type="helix" evidence="4">
    <location>
        <begin position="113"/>
        <end position="135"/>
    </location>
</feature>
<feature type="helix" evidence="4">
    <location>
        <begin position="139"/>
        <end position="168"/>
    </location>
</feature>
<feature type="helix" evidence="4">
    <location>
        <begin position="173"/>
        <end position="190"/>
    </location>
</feature>
<feature type="helix" evidence="4">
    <location>
        <begin position="193"/>
        <end position="199"/>
    </location>
</feature>
<feature type="turn" evidence="4">
    <location>
        <begin position="201"/>
        <end position="204"/>
    </location>
</feature>
<feature type="helix" evidence="4">
    <location>
        <begin position="209"/>
        <end position="232"/>
    </location>
</feature>